<proteinExistence type="inferred from homology"/>
<feature type="chain" id="PRO_1000072265" description="3-hydroxyacyl-[acyl-carrier-protein] dehydratase FabZ">
    <location>
        <begin position="1"/>
        <end position="153"/>
    </location>
</feature>
<feature type="active site" evidence="1">
    <location>
        <position position="57"/>
    </location>
</feature>
<sequence>MTTEKKSLGIQEIMDLLPHRYPFLMVDKVENYEISDERKTLRAIKNVSFNEPIFQGHFPAKPVFPGVLILEAMAQATGILAFTMVGKPSPNELYYFASIDNARFKRPVGPGDQLVLDVEFLKERRGIAKFTGVATVNGEVVCTAELMCAKREV</sequence>
<dbReference type="EC" id="4.2.1.59" evidence="1"/>
<dbReference type="EMBL" id="CP000462">
    <property type="protein sequence ID" value="ABK38890.1"/>
    <property type="molecule type" value="Genomic_DNA"/>
</dbReference>
<dbReference type="RefSeq" id="WP_010634777.1">
    <property type="nucleotide sequence ID" value="NC_008570.1"/>
</dbReference>
<dbReference type="RefSeq" id="YP_855725.1">
    <property type="nucleotide sequence ID" value="NC_008570.1"/>
</dbReference>
<dbReference type="SMR" id="A0KHH4"/>
<dbReference type="STRING" id="380703.AHA_1184"/>
<dbReference type="EnsemblBacteria" id="ABK38890">
    <property type="protein sequence ID" value="ABK38890"/>
    <property type="gene ID" value="AHA_1184"/>
</dbReference>
<dbReference type="GeneID" id="47846510"/>
<dbReference type="KEGG" id="aha:AHA_1184"/>
<dbReference type="PATRIC" id="fig|380703.7.peg.1191"/>
<dbReference type="eggNOG" id="COG0764">
    <property type="taxonomic scope" value="Bacteria"/>
</dbReference>
<dbReference type="HOGENOM" id="CLU_078912_1_0_6"/>
<dbReference type="OrthoDB" id="9772788at2"/>
<dbReference type="PRO" id="PR:A0KHH4"/>
<dbReference type="Proteomes" id="UP000000756">
    <property type="component" value="Chromosome"/>
</dbReference>
<dbReference type="GO" id="GO:0005737">
    <property type="term" value="C:cytoplasm"/>
    <property type="evidence" value="ECO:0007669"/>
    <property type="project" value="UniProtKB-SubCell"/>
</dbReference>
<dbReference type="GO" id="GO:0016020">
    <property type="term" value="C:membrane"/>
    <property type="evidence" value="ECO:0007669"/>
    <property type="project" value="GOC"/>
</dbReference>
<dbReference type="GO" id="GO:0019171">
    <property type="term" value="F:(3R)-hydroxyacyl-[acyl-carrier-protein] dehydratase activity"/>
    <property type="evidence" value="ECO:0007669"/>
    <property type="project" value="UniProtKB-EC"/>
</dbReference>
<dbReference type="GO" id="GO:0006633">
    <property type="term" value="P:fatty acid biosynthetic process"/>
    <property type="evidence" value="ECO:0007669"/>
    <property type="project" value="UniProtKB-UniRule"/>
</dbReference>
<dbReference type="GO" id="GO:0009245">
    <property type="term" value="P:lipid A biosynthetic process"/>
    <property type="evidence" value="ECO:0007669"/>
    <property type="project" value="UniProtKB-UniRule"/>
</dbReference>
<dbReference type="CDD" id="cd01288">
    <property type="entry name" value="FabZ"/>
    <property type="match status" value="1"/>
</dbReference>
<dbReference type="FunFam" id="3.10.129.10:FF:000001">
    <property type="entry name" value="3-hydroxyacyl-[acyl-carrier-protein] dehydratase FabZ"/>
    <property type="match status" value="1"/>
</dbReference>
<dbReference type="Gene3D" id="3.10.129.10">
    <property type="entry name" value="Hotdog Thioesterase"/>
    <property type="match status" value="1"/>
</dbReference>
<dbReference type="HAMAP" id="MF_00406">
    <property type="entry name" value="FabZ"/>
    <property type="match status" value="1"/>
</dbReference>
<dbReference type="InterPro" id="IPR013114">
    <property type="entry name" value="FabA_FabZ"/>
</dbReference>
<dbReference type="InterPro" id="IPR010084">
    <property type="entry name" value="FabZ"/>
</dbReference>
<dbReference type="InterPro" id="IPR029069">
    <property type="entry name" value="HotDog_dom_sf"/>
</dbReference>
<dbReference type="NCBIfam" id="TIGR01750">
    <property type="entry name" value="fabZ"/>
    <property type="match status" value="1"/>
</dbReference>
<dbReference type="NCBIfam" id="NF000582">
    <property type="entry name" value="PRK00006.1"/>
    <property type="match status" value="1"/>
</dbReference>
<dbReference type="PANTHER" id="PTHR30272">
    <property type="entry name" value="3-HYDROXYACYL-[ACYL-CARRIER-PROTEIN] DEHYDRATASE"/>
    <property type="match status" value="1"/>
</dbReference>
<dbReference type="PANTHER" id="PTHR30272:SF1">
    <property type="entry name" value="3-HYDROXYACYL-[ACYL-CARRIER-PROTEIN] DEHYDRATASE"/>
    <property type="match status" value="1"/>
</dbReference>
<dbReference type="Pfam" id="PF07977">
    <property type="entry name" value="FabA"/>
    <property type="match status" value="1"/>
</dbReference>
<dbReference type="SUPFAM" id="SSF54637">
    <property type="entry name" value="Thioesterase/thiol ester dehydrase-isomerase"/>
    <property type="match status" value="1"/>
</dbReference>
<reference key="1">
    <citation type="journal article" date="2006" name="J. Bacteriol.">
        <title>Genome sequence of Aeromonas hydrophila ATCC 7966T: jack of all trades.</title>
        <authorList>
            <person name="Seshadri R."/>
            <person name="Joseph S.W."/>
            <person name="Chopra A.K."/>
            <person name="Sha J."/>
            <person name="Shaw J."/>
            <person name="Graf J."/>
            <person name="Haft D.H."/>
            <person name="Wu M."/>
            <person name="Ren Q."/>
            <person name="Rosovitz M.J."/>
            <person name="Madupu R."/>
            <person name="Tallon L."/>
            <person name="Kim M."/>
            <person name="Jin S."/>
            <person name="Vuong H."/>
            <person name="Stine O.C."/>
            <person name="Ali A."/>
            <person name="Horneman A.J."/>
            <person name="Heidelberg J.F."/>
        </authorList>
    </citation>
    <scope>NUCLEOTIDE SEQUENCE [LARGE SCALE GENOMIC DNA]</scope>
    <source>
        <strain>ATCC 7966 / DSM 30187 / BCRC 13018 / CCUG 14551 / JCM 1027 / KCTC 2358 / NCIMB 9240 / NCTC 8049</strain>
    </source>
</reference>
<keyword id="KW-0963">Cytoplasm</keyword>
<keyword id="KW-0441">Lipid A biosynthesis</keyword>
<keyword id="KW-0444">Lipid biosynthesis</keyword>
<keyword id="KW-0443">Lipid metabolism</keyword>
<keyword id="KW-0456">Lyase</keyword>
<keyword id="KW-1185">Reference proteome</keyword>
<comment type="function">
    <text evidence="1">Involved in unsaturated fatty acids biosynthesis. Catalyzes the dehydration of short chain beta-hydroxyacyl-ACPs and long chain saturated and unsaturated beta-hydroxyacyl-ACPs.</text>
</comment>
<comment type="catalytic activity">
    <reaction evidence="1">
        <text>a (3R)-hydroxyacyl-[ACP] = a (2E)-enoyl-[ACP] + H2O</text>
        <dbReference type="Rhea" id="RHEA:13097"/>
        <dbReference type="Rhea" id="RHEA-COMP:9925"/>
        <dbReference type="Rhea" id="RHEA-COMP:9945"/>
        <dbReference type="ChEBI" id="CHEBI:15377"/>
        <dbReference type="ChEBI" id="CHEBI:78784"/>
        <dbReference type="ChEBI" id="CHEBI:78827"/>
        <dbReference type="EC" id="4.2.1.59"/>
    </reaction>
</comment>
<comment type="subcellular location">
    <subcellularLocation>
        <location evidence="1">Cytoplasm</location>
    </subcellularLocation>
</comment>
<comment type="similarity">
    <text evidence="1">Belongs to the thioester dehydratase family. FabZ subfamily.</text>
</comment>
<protein>
    <recommendedName>
        <fullName evidence="1">3-hydroxyacyl-[acyl-carrier-protein] dehydratase FabZ</fullName>
        <ecNumber evidence="1">4.2.1.59</ecNumber>
    </recommendedName>
    <alternativeName>
        <fullName evidence="1">(3R)-hydroxymyristoyl-[acyl-carrier-protein] dehydratase</fullName>
        <shortName evidence="1">(3R)-hydroxymyristoyl-ACP dehydrase</shortName>
    </alternativeName>
    <alternativeName>
        <fullName evidence="1">Beta-hydroxyacyl-ACP dehydratase</fullName>
    </alternativeName>
</protein>
<accession>A0KHH4</accession>
<organism>
    <name type="scientific">Aeromonas hydrophila subsp. hydrophila (strain ATCC 7966 / DSM 30187 / BCRC 13018 / CCUG 14551 / JCM 1027 / KCTC 2358 / NCIMB 9240 / NCTC 8049)</name>
    <dbReference type="NCBI Taxonomy" id="380703"/>
    <lineage>
        <taxon>Bacteria</taxon>
        <taxon>Pseudomonadati</taxon>
        <taxon>Pseudomonadota</taxon>
        <taxon>Gammaproteobacteria</taxon>
        <taxon>Aeromonadales</taxon>
        <taxon>Aeromonadaceae</taxon>
        <taxon>Aeromonas</taxon>
    </lineage>
</organism>
<evidence type="ECO:0000255" key="1">
    <source>
        <dbReference type="HAMAP-Rule" id="MF_00406"/>
    </source>
</evidence>
<name>FABZ_AERHH</name>
<gene>
    <name evidence="1" type="primary">fabZ</name>
    <name type="ordered locus">AHA_1184</name>
</gene>